<reference key="1">
    <citation type="journal article" date="2001" name="Lancet">
        <title>Whole genome sequencing of meticillin-resistant Staphylococcus aureus.</title>
        <authorList>
            <person name="Kuroda M."/>
            <person name="Ohta T."/>
            <person name="Uchiyama I."/>
            <person name="Baba T."/>
            <person name="Yuzawa H."/>
            <person name="Kobayashi I."/>
            <person name="Cui L."/>
            <person name="Oguchi A."/>
            <person name="Aoki K."/>
            <person name="Nagai Y."/>
            <person name="Lian J.-Q."/>
            <person name="Ito T."/>
            <person name="Kanamori M."/>
            <person name="Matsumaru H."/>
            <person name="Maruyama A."/>
            <person name="Murakami H."/>
            <person name="Hosoyama A."/>
            <person name="Mizutani-Ui Y."/>
            <person name="Takahashi N.K."/>
            <person name="Sawano T."/>
            <person name="Inoue R."/>
            <person name="Kaito C."/>
            <person name="Sekimizu K."/>
            <person name="Hirakawa H."/>
            <person name="Kuhara S."/>
            <person name="Goto S."/>
            <person name="Yabuzaki J."/>
            <person name="Kanehisa M."/>
            <person name="Yamashita A."/>
            <person name="Oshima K."/>
            <person name="Furuya K."/>
            <person name="Yoshino C."/>
            <person name="Shiba T."/>
            <person name="Hattori M."/>
            <person name="Ogasawara N."/>
            <person name="Hayashi H."/>
            <person name="Hiramatsu K."/>
        </authorList>
    </citation>
    <scope>NUCLEOTIDE SEQUENCE [LARGE SCALE GENOMIC DNA]</scope>
    <source>
        <strain>N315</strain>
    </source>
</reference>
<gene>
    <name type="primary">arsB</name>
    <name type="ordered locus">SA1592</name>
</gene>
<organism>
    <name type="scientific">Staphylococcus aureus (strain N315)</name>
    <dbReference type="NCBI Taxonomy" id="158879"/>
    <lineage>
        <taxon>Bacteria</taxon>
        <taxon>Bacillati</taxon>
        <taxon>Bacillota</taxon>
        <taxon>Bacilli</taxon>
        <taxon>Bacillales</taxon>
        <taxon>Staphylococcaceae</taxon>
        <taxon>Staphylococcus</taxon>
    </lineage>
</organism>
<accession>P63620</accession>
<accession>Q99T95</accession>
<dbReference type="EMBL" id="BA000018">
    <property type="protein sequence ID" value="BAB42860.1"/>
    <property type="status" value="ALT_INIT"/>
    <property type="molecule type" value="Genomic_DNA"/>
</dbReference>
<dbReference type="PIR" id="G89962">
    <property type="entry name" value="G89962"/>
</dbReference>
<dbReference type="SMR" id="P63620"/>
<dbReference type="EnsemblBacteria" id="BAB42860">
    <property type="protein sequence ID" value="BAB42860"/>
    <property type="gene ID" value="BAB42860"/>
</dbReference>
<dbReference type="KEGG" id="sau:SA1592"/>
<dbReference type="HOGENOM" id="CLU_043931_1_0_9"/>
<dbReference type="GO" id="GO:0005886">
    <property type="term" value="C:plasma membrane"/>
    <property type="evidence" value="ECO:0007669"/>
    <property type="project" value="UniProtKB-SubCell"/>
</dbReference>
<dbReference type="GO" id="GO:0015105">
    <property type="term" value="F:arsenite transmembrane transporter activity"/>
    <property type="evidence" value="ECO:0007669"/>
    <property type="project" value="InterPro"/>
</dbReference>
<dbReference type="GO" id="GO:0046685">
    <property type="term" value="P:response to arsenic-containing substance"/>
    <property type="evidence" value="ECO:0007669"/>
    <property type="project" value="UniProtKB-KW"/>
</dbReference>
<dbReference type="CDD" id="cd01118">
    <property type="entry name" value="ArsB_permease"/>
    <property type="match status" value="1"/>
</dbReference>
<dbReference type="InterPro" id="IPR000802">
    <property type="entry name" value="Arsenical_pump_ArsB"/>
</dbReference>
<dbReference type="NCBIfam" id="TIGR00935">
    <property type="entry name" value="2a45"/>
    <property type="match status" value="1"/>
</dbReference>
<dbReference type="NCBIfam" id="NF033877">
    <property type="entry name" value="arsB_Sta_pI258"/>
    <property type="match status" value="1"/>
</dbReference>
<dbReference type="NCBIfam" id="NF011980">
    <property type="entry name" value="PRK15445.1"/>
    <property type="match status" value="1"/>
</dbReference>
<dbReference type="PANTHER" id="PTHR43302">
    <property type="entry name" value="TRANSPORTER ARSB-RELATED"/>
    <property type="match status" value="1"/>
</dbReference>
<dbReference type="PANTHER" id="PTHR43302:SF5">
    <property type="entry name" value="TRANSPORTER ARSB-RELATED"/>
    <property type="match status" value="1"/>
</dbReference>
<dbReference type="Pfam" id="PF02040">
    <property type="entry name" value="ArsB"/>
    <property type="match status" value="1"/>
</dbReference>
<dbReference type="PRINTS" id="PR00758">
    <property type="entry name" value="ARSENICPUMP"/>
</dbReference>
<feature type="chain" id="PRO_0000201472" description="Arsenical pump membrane protein">
    <location>
        <begin position="1"/>
        <end position="429"/>
    </location>
</feature>
<feature type="transmembrane region" description="Helical" evidence="1">
    <location>
        <begin position="3"/>
        <end position="23"/>
    </location>
</feature>
<feature type="transmembrane region" description="Helical" evidence="1">
    <location>
        <begin position="25"/>
        <end position="45"/>
    </location>
</feature>
<feature type="transmembrane region" description="Helical" evidence="1">
    <location>
        <begin position="50"/>
        <end position="70"/>
    </location>
</feature>
<feature type="transmembrane region" description="Helical" evidence="1">
    <location>
        <begin position="99"/>
        <end position="119"/>
    </location>
</feature>
<feature type="transmembrane region" description="Helical" evidence="1">
    <location>
        <begin position="137"/>
        <end position="157"/>
    </location>
</feature>
<feature type="transmembrane region" description="Helical" evidence="1">
    <location>
        <begin position="180"/>
        <end position="200"/>
    </location>
</feature>
<feature type="transmembrane region" description="Helical" evidence="1">
    <location>
        <begin position="222"/>
        <end position="242"/>
    </location>
</feature>
<feature type="transmembrane region" description="Helical" evidence="1">
    <location>
        <begin position="244"/>
        <end position="264"/>
    </location>
</feature>
<feature type="transmembrane region" description="Helical" evidence="1">
    <location>
        <begin position="275"/>
        <end position="295"/>
    </location>
</feature>
<feature type="transmembrane region" description="Helical" evidence="1">
    <location>
        <begin position="316"/>
        <end position="336"/>
    </location>
</feature>
<feature type="transmembrane region" description="Helical" evidence="1">
    <location>
        <begin position="372"/>
        <end position="392"/>
    </location>
</feature>
<feature type="transmembrane region" description="Helical" evidence="1">
    <location>
        <begin position="408"/>
        <end position="428"/>
    </location>
</feature>
<comment type="function">
    <text>Involved in arsenical resistance. Thought to form the channel of an arsenite pump.</text>
</comment>
<comment type="subcellular location">
    <subcellularLocation>
        <location evidence="2">Cell membrane</location>
        <topology evidence="2">Multi-pass membrane protein</topology>
    </subcellularLocation>
</comment>
<comment type="similarity">
    <text evidence="2">Belongs to the ArsB family.</text>
</comment>
<comment type="sequence caution" evidence="2">
    <conflict type="erroneous initiation">
        <sequence resource="EMBL-CDS" id="BAB42860"/>
    </conflict>
</comment>
<sequence length="429" mass="47141">MTTLATLIFLVTLLFVLWQPKGLDIGITALTGAFIAVITGVVSFSDVFEVTGIVWNATLTFVSVILISLILDKVGLFEWSAIHMLHASKGNGLKMFVYIILLGAIVAAFFANDGAALILTPIVLAMVKNIGFSKRAIFPFIIASGFIADTTSLPLIVSNLVNIISADYFHVGFVRYFSRMIIPNLFSLLASIIVLWLYFRKAIPKTFDDNNIKHPKDAINDLKLFKISWIVLVILLFGYLISEFTKIPVSIFTGIIAFIFLMLARKSNAVNIKQVIKGAPWNIVLFSIGMYIVVFGLRNAGITLILAKILEYISNYGLFSTILGMGFISAFLSSIMNNMPTVLIDAIAIGQSNVHGMLKEGLIYANVIGSDLGPKITPIGSLATLLWLHVLTQKDVKISWGTYFKTGIIITIPVLFITLIGLYLTLIIF</sequence>
<keyword id="KW-0059">Arsenical resistance</keyword>
<keyword id="KW-1003">Cell membrane</keyword>
<keyword id="KW-0472">Membrane</keyword>
<keyword id="KW-0812">Transmembrane</keyword>
<keyword id="KW-1133">Transmembrane helix</keyword>
<keyword id="KW-0813">Transport</keyword>
<evidence type="ECO:0000255" key="1"/>
<evidence type="ECO:0000305" key="2"/>
<name>ARSB_STAAN</name>
<protein>
    <recommendedName>
        <fullName>Arsenical pump membrane protein</fullName>
    </recommendedName>
    <alternativeName>
        <fullName>Arsenic efflux pump protein</fullName>
    </alternativeName>
</protein>
<proteinExistence type="inferred from homology"/>